<gene>
    <name evidence="1" type="primary">lolD</name>
    <name type="ordered locus">Saro_1766</name>
</gene>
<keyword id="KW-0067">ATP-binding</keyword>
<keyword id="KW-0997">Cell inner membrane</keyword>
<keyword id="KW-1003">Cell membrane</keyword>
<keyword id="KW-0472">Membrane</keyword>
<keyword id="KW-0547">Nucleotide-binding</keyword>
<keyword id="KW-1185">Reference proteome</keyword>
<keyword id="KW-1278">Translocase</keyword>
<keyword id="KW-0813">Transport</keyword>
<reference key="1">
    <citation type="submission" date="2006-01" db="EMBL/GenBank/DDBJ databases">
        <title>Complete sequence of Novosphingobium aromaticivorans DSM 12444.</title>
        <authorList>
            <consortium name="US DOE Joint Genome Institute"/>
            <person name="Copeland A."/>
            <person name="Lucas S."/>
            <person name="Lapidus A."/>
            <person name="Barry K."/>
            <person name="Detter J.C."/>
            <person name="Glavina T."/>
            <person name="Hammon N."/>
            <person name="Israni S."/>
            <person name="Pitluck S."/>
            <person name="Chain P."/>
            <person name="Malfatti S."/>
            <person name="Shin M."/>
            <person name="Vergez L."/>
            <person name="Schmutz J."/>
            <person name="Larimer F."/>
            <person name="Land M."/>
            <person name="Kyrpides N."/>
            <person name="Ivanova N."/>
            <person name="Fredrickson J."/>
            <person name="Balkwill D."/>
            <person name="Romine M.F."/>
            <person name="Richardson P."/>
        </authorList>
    </citation>
    <scope>NUCLEOTIDE SEQUENCE [LARGE SCALE GENOMIC DNA]</scope>
    <source>
        <strain>ATCC 700278 / DSM 12444 / CCUG 56034 / CIP 105152 / NBRC 16084 / F199</strain>
    </source>
</reference>
<proteinExistence type="inferred from homology"/>
<comment type="function">
    <text evidence="1">Part of the ABC transporter complex LolCDE involved in the translocation of mature outer membrane-directed lipoproteins, from the inner membrane to the periplasmic chaperone, LolA. Responsible for the formation of the LolA-lipoprotein complex in an ATP-dependent manner.</text>
</comment>
<comment type="subunit">
    <text evidence="1">The complex is composed of two ATP-binding proteins (LolD) and two transmembrane proteins (LolC and LolE).</text>
</comment>
<comment type="subcellular location">
    <subcellularLocation>
        <location evidence="1">Cell inner membrane</location>
        <topology evidence="1">Peripheral membrane protein</topology>
    </subcellularLocation>
</comment>
<comment type="similarity">
    <text evidence="1">Belongs to the ABC transporter superfamily. Lipoprotein translocase (TC 3.A.1.125) family.</text>
</comment>
<name>LOLD_NOVAD</name>
<protein>
    <recommendedName>
        <fullName evidence="1">Lipoprotein-releasing system ATP-binding protein LolD</fullName>
        <ecNumber evidence="1">7.6.2.-</ecNumber>
    </recommendedName>
</protein>
<sequence>MSDPVVRLRELRRSFSQGGVTIDVLRGVNLEIRPGEIVALLGPSGSGKSTMLQAIGLLEGGFSGLIEIAGTDASKLSGDDRTALRRDHLGFVYQFHHLLPDFNAIENVVLPQLVAGTDRAVAEARAAELLSALGLAKRLDHRPSQLSGGEQQRVAVARALANRPEMVLADEPTGNLDEATADRVLEEFLKLVRGEGSAALIATHNERLALRMDRVVRLHEGVLE</sequence>
<accession>Q2G7G7</accession>
<feature type="chain" id="PRO_0000272115" description="Lipoprotein-releasing system ATP-binding protein LolD">
    <location>
        <begin position="1"/>
        <end position="224"/>
    </location>
</feature>
<feature type="domain" description="ABC transporter" evidence="1">
    <location>
        <begin position="6"/>
        <end position="224"/>
    </location>
</feature>
<feature type="binding site" evidence="1">
    <location>
        <begin position="42"/>
        <end position="49"/>
    </location>
    <ligand>
        <name>ATP</name>
        <dbReference type="ChEBI" id="CHEBI:30616"/>
    </ligand>
</feature>
<dbReference type="EC" id="7.6.2.-" evidence="1"/>
<dbReference type="EMBL" id="CP000248">
    <property type="protein sequence ID" value="ABD26206.1"/>
    <property type="molecule type" value="Genomic_DNA"/>
</dbReference>
<dbReference type="RefSeq" id="WP_011445416.1">
    <property type="nucleotide sequence ID" value="NC_007794.1"/>
</dbReference>
<dbReference type="SMR" id="Q2G7G7"/>
<dbReference type="STRING" id="279238.Saro_1766"/>
<dbReference type="KEGG" id="nar:Saro_1766"/>
<dbReference type="eggNOG" id="COG1136">
    <property type="taxonomic scope" value="Bacteria"/>
</dbReference>
<dbReference type="HOGENOM" id="CLU_000604_1_22_5"/>
<dbReference type="Proteomes" id="UP000009134">
    <property type="component" value="Chromosome"/>
</dbReference>
<dbReference type="GO" id="GO:0005886">
    <property type="term" value="C:plasma membrane"/>
    <property type="evidence" value="ECO:0007669"/>
    <property type="project" value="UniProtKB-SubCell"/>
</dbReference>
<dbReference type="GO" id="GO:0005524">
    <property type="term" value="F:ATP binding"/>
    <property type="evidence" value="ECO:0007669"/>
    <property type="project" value="UniProtKB-KW"/>
</dbReference>
<dbReference type="GO" id="GO:0016887">
    <property type="term" value="F:ATP hydrolysis activity"/>
    <property type="evidence" value="ECO:0007669"/>
    <property type="project" value="InterPro"/>
</dbReference>
<dbReference type="GO" id="GO:0022857">
    <property type="term" value="F:transmembrane transporter activity"/>
    <property type="evidence" value="ECO:0007669"/>
    <property type="project" value="TreeGrafter"/>
</dbReference>
<dbReference type="GO" id="GO:0044874">
    <property type="term" value="P:lipoprotein localization to outer membrane"/>
    <property type="evidence" value="ECO:0007669"/>
    <property type="project" value="TreeGrafter"/>
</dbReference>
<dbReference type="GO" id="GO:0089705">
    <property type="term" value="P:protein localization to outer membrane"/>
    <property type="evidence" value="ECO:0007669"/>
    <property type="project" value="TreeGrafter"/>
</dbReference>
<dbReference type="CDD" id="cd03255">
    <property type="entry name" value="ABC_MJ0796_LolCDE_FtsE"/>
    <property type="match status" value="1"/>
</dbReference>
<dbReference type="FunFam" id="3.40.50.300:FF:000032">
    <property type="entry name" value="Export ABC transporter ATP-binding protein"/>
    <property type="match status" value="1"/>
</dbReference>
<dbReference type="Gene3D" id="3.40.50.300">
    <property type="entry name" value="P-loop containing nucleotide triphosphate hydrolases"/>
    <property type="match status" value="1"/>
</dbReference>
<dbReference type="InterPro" id="IPR003593">
    <property type="entry name" value="AAA+_ATPase"/>
</dbReference>
<dbReference type="InterPro" id="IPR003439">
    <property type="entry name" value="ABC_transporter-like_ATP-bd"/>
</dbReference>
<dbReference type="InterPro" id="IPR017871">
    <property type="entry name" value="ABC_transporter-like_CS"/>
</dbReference>
<dbReference type="InterPro" id="IPR015854">
    <property type="entry name" value="ABC_transpr_LolD-like"/>
</dbReference>
<dbReference type="InterPro" id="IPR017911">
    <property type="entry name" value="MacB-like_ATP-bd"/>
</dbReference>
<dbReference type="InterPro" id="IPR027417">
    <property type="entry name" value="P-loop_NTPase"/>
</dbReference>
<dbReference type="PANTHER" id="PTHR24220">
    <property type="entry name" value="IMPORT ATP-BINDING PROTEIN"/>
    <property type="match status" value="1"/>
</dbReference>
<dbReference type="PANTHER" id="PTHR24220:SF689">
    <property type="entry name" value="LIPOPROTEIN-RELEASING SYSTEM ATP-BINDING PROTEIN LOLD"/>
    <property type="match status" value="1"/>
</dbReference>
<dbReference type="Pfam" id="PF00005">
    <property type="entry name" value="ABC_tran"/>
    <property type="match status" value="1"/>
</dbReference>
<dbReference type="SMART" id="SM00382">
    <property type="entry name" value="AAA"/>
    <property type="match status" value="1"/>
</dbReference>
<dbReference type="SUPFAM" id="SSF52540">
    <property type="entry name" value="P-loop containing nucleoside triphosphate hydrolases"/>
    <property type="match status" value="1"/>
</dbReference>
<dbReference type="PROSITE" id="PS00211">
    <property type="entry name" value="ABC_TRANSPORTER_1"/>
    <property type="match status" value="1"/>
</dbReference>
<dbReference type="PROSITE" id="PS50893">
    <property type="entry name" value="ABC_TRANSPORTER_2"/>
    <property type="match status" value="1"/>
</dbReference>
<dbReference type="PROSITE" id="PS51244">
    <property type="entry name" value="LOLD"/>
    <property type="match status" value="1"/>
</dbReference>
<organism>
    <name type="scientific">Novosphingobium aromaticivorans (strain ATCC 700278 / DSM 12444 / CCUG 56034 / CIP 105152 / NBRC 16084 / F199)</name>
    <dbReference type="NCBI Taxonomy" id="279238"/>
    <lineage>
        <taxon>Bacteria</taxon>
        <taxon>Pseudomonadati</taxon>
        <taxon>Pseudomonadota</taxon>
        <taxon>Alphaproteobacteria</taxon>
        <taxon>Sphingomonadales</taxon>
        <taxon>Sphingomonadaceae</taxon>
        <taxon>Novosphingobium</taxon>
    </lineage>
</organism>
<evidence type="ECO:0000255" key="1">
    <source>
        <dbReference type="HAMAP-Rule" id="MF_01708"/>
    </source>
</evidence>